<organism>
    <name type="scientific">Bacillus thuringiensis (strain Al Hakam)</name>
    <dbReference type="NCBI Taxonomy" id="412694"/>
    <lineage>
        <taxon>Bacteria</taxon>
        <taxon>Bacillati</taxon>
        <taxon>Bacillota</taxon>
        <taxon>Bacilli</taxon>
        <taxon>Bacillales</taxon>
        <taxon>Bacillaceae</taxon>
        <taxon>Bacillus</taxon>
        <taxon>Bacillus cereus group</taxon>
    </lineage>
</organism>
<comment type="function">
    <text evidence="1">Catalyzes the transfer of the enolpyruvyl moiety of phosphoenolpyruvate (PEP) to the 5-hydroxyl of shikimate-3-phosphate (S3P) to produce enolpyruvyl shikimate-3-phosphate and inorganic phosphate.</text>
</comment>
<comment type="catalytic activity">
    <reaction evidence="1">
        <text>3-phosphoshikimate + phosphoenolpyruvate = 5-O-(1-carboxyvinyl)-3-phosphoshikimate + phosphate</text>
        <dbReference type="Rhea" id="RHEA:21256"/>
        <dbReference type="ChEBI" id="CHEBI:43474"/>
        <dbReference type="ChEBI" id="CHEBI:57701"/>
        <dbReference type="ChEBI" id="CHEBI:58702"/>
        <dbReference type="ChEBI" id="CHEBI:145989"/>
        <dbReference type="EC" id="2.5.1.19"/>
    </reaction>
    <physiologicalReaction direction="left-to-right" evidence="1">
        <dbReference type="Rhea" id="RHEA:21257"/>
    </physiologicalReaction>
</comment>
<comment type="pathway">
    <text evidence="1">Metabolic intermediate biosynthesis; chorismate biosynthesis; chorismate from D-erythrose 4-phosphate and phosphoenolpyruvate: step 6/7.</text>
</comment>
<comment type="subunit">
    <text evidence="1">Monomer.</text>
</comment>
<comment type="subcellular location">
    <subcellularLocation>
        <location evidence="1">Cytoplasm</location>
    </subcellularLocation>
</comment>
<comment type="similarity">
    <text evidence="1">Belongs to the EPSP synthase family.</text>
</comment>
<gene>
    <name evidence="1" type="primary">aroA</name>
    <name type="ordered locus">BALH_2641</name>
</gene>
<keyword id="KW-0028">Amino-acid biosynthesis</keyword>
<keyword id="KW-0057">Aromatic amino acid biosynthesis</keyword>
<keyword id="KW-0963">Cytoplasm</keyword>
<keyword id="KW-0808">Transferase</keyword>
<name>AROA_BACAH</name>
<proteinExistence type="inferred from homology"/>
<reference key="1">
    <citation type="journal article" date="2007" name="J. Bacteriol.">
        <title>The complete genome sequence of Bacillus thuringiensis Al Hakam.</title>
        <authorList>
            <person name="Challacombe J.F."/>
            <person name="Altherr M.R."/>
            <person name="Xie G."/>
            <person name="Bhotika S.S."/>
            <person name="Brown N."/>
            <person name="Bruce D."/>
            <person name="Campbell C.S."/>
            <person name="Campbell M.L."/>
            <person name="Chen J."/>
            <person name="Chertkov O."/>
            <person name="Cleland C."/>
            <person name="Dimitrijevic M."/>
            <person name="Doggett N.A."/>
            <person name="Fawcett J.J."/>
            <person name="Glavina T."/>
            <person name="Goodwin L.A."/>
            <person name="Green L.D."/>
            <person name="Han C.S."/>
            <person name="Hill K.K."/>
            <person name="Hitchcock P."/>
            <person name="Jackson P.J."/>
            <person name="Keim P."/>
            <person name="Kewalramani A.R."/>
            <person name="Longmire J."/>
            <person name="Lucas S."/>
            <person name="Malfatti S."/>
            <person name="Martinez D."/>
            <person name="McMurry K."/>
            <person name="Meincke L.J."/>
            <person name="Misra M."/>
            <person name="Moseman B.L."/>
            <person name="Mundt M."/>
            <person name="Munk A.C."/>
            <person name="Okinaka R.T."/>
            <person name="Parson-Quintana B."/>
            <person name="Reilly L.P."/>
            <person name="Richardson P."/>
            <person name="Robinson D.L."/>
            <person name="Saunders E."/>
            <person name="Tapia R."/>
            <person name="Tesmer J.G."/>
            <person name="Thayer N."/>
            <person name="Thompson L.S."/>
            <person name="Tice H."/>
            <person name="Ticknor L.O."/>
            <person name="Wills P.L."/>
            <person name="Gilna P."/>
            <person name="Brettin T.S."/>
        </authorList>
    </citation>
    <scope>NUCLEOTIDE SEQUENCE [LARGE SCALE GENOMIC DNA]</scope>
    <source>
        <strain>Al Hakam</strain>
    </source>
</reference>
<protein>
    <recommendedName>
        <fullName evidence="1">3-phosphoshikimate 1-carboxyvinyltransferase</fullName>
        <ecNumber evidence="1">2.5.1.19</ecNumber>
    </recommendedName>
    <alternativeName>
        <fullName evidence="1">5-enolpyruvylshikimate-3-phosphate synthase</fullName>
        <shortName evidence="1">EPSP synthase</shortName>
        <shortName evidence="1">EPSPS</shortName>
    </alternativeName>
</protein>
<feature type="chain" id="PRO_1000012408" description="3-phosphoshikimate 1-carboxyvinyltransferase">
    <location>
        <begin position="1"/>
        <end position="429"/>
    </location>
</feature>
<feature type="active site" description="Proton acceptor" evidence="1">
    <location>
        <position position="316"/>
    </location>
</feature>
<feature type="binding site" evidence="1">
    <location>
        <position position="23"/>
    </location>
    <ligand>
        <name>3-phosphoshikimate</name>
        <dbReference type="ChEBI" id="CHEBI:145989"/>
    </ligand>
</feature>
<feature type="binding site" evidence="1">
    <location>
        <position position="23"/>
    </location>
    <ligand>
        <name>phosphoenolpyruvate</name>
        <dbReference type="ChEBI" id="CHEBI:58702"/>
    </ligand>
</feature>
<feature type="binding site" evidence="1">
    <location>
        <position position="24"/>
    </location>
    <ligand>
        <name>3-phosphoshikimate</name>
        <dbReference type="ChEBI" id="CHEBI:145989"/>
    </ligand>
</feature>
<feature type="binding site" evidence="1">
    <location>
        <position position="28"/>
    </location>
    <ligand>
        <name>3-phosphoshikimate</name>
        <dbReference type="ChEBI" id="CHEBI:145989"/>
    </ligand>
</feature>
<feature type="binding site" evidence="1">
    <location>
        <position position="95"/>
    </location>
    <ligand>
        <name>phosphoenolpyruvate</name>
        <dbReference type="ChEBI" id="CHEBI:58702"/>
    </ligand>
</feature>
<feature type="binding site" evidence="1">
    <location>
        <position position="123"/>
    </location>
    <ligand>
        <name>phosphoenolpyruvate</name>
        <dbReference type="ChEBI" id="CHEBI:58702"/>
    </ligand>
</feature>
<feature type="binding site" evidence="1">
    <location>
        <position position="168"/>
    </location>
    <ligand>
        <name>3-phosphoshikimate</name>
        <dbReference type="ChEBI" id="CHEBI:145989"/>
    </ligand>
</feature>
<feature type="binding site" evidence="1">
    <location>
        <position position="170"/>
    </location>
    <ligand>
        <name>3-phosphoshikimate</name>
        <dbReference type="ChEBI" id="CHEBI:145989"/>
    </ligand>
</feature>
<feature type="binding site" evidence="1">
    <location>
        <position position="170"/>
    </location>
    <ligand>
        <name>phosphoenolpyruvate</name>
        <dbReference type="ChEBI" id="CHEBI:58702"/>
    </ligand>
</feature>
<feature type="binding site" evidence="1">
    <location>
        <position position="316"/>
    </location>
    <ligand>
        <name>3-phosphoshikimate</name>
        <dbReference type="ChEBI" id="CHEBI:145989"/>
    </ligand>
</feature>
<feature type="binding site" evidence="1">
    <location>
        <position position="343"/>
    </location>
    <ligand>
        <name>3-phosphoshikimate</name>
        <dbReference type="ChEBI" id="CHEBI:145989"/>
    </ligand>
</feature>
<feature type="binding site" evidence="1">
    <location>
        <position position="347"/>
    </location>
    <ligand>
        <name>phosphoenolpyruvate</name>
        <dbReference type="ChEBI" id="CHEBI:58702"/>
    </ligand>
</feature>
<feature type="binding site" evidence="1">
    <location>
        <position position="389"/>
    </location>
    <ligand>
        <name>phosphoenolpyruvate</name>
        <dbReference type="ChEBI" id="CHEBI:58702"/>
    </ligand>
</feature>
<dbReference type="EC" id="2.5.1.19" evidence="1"/>
<dbReference type="EMBL" id="CP000485">
    <property type="protein sequence ID" value="ABK85924.1"/>
    <property type="molecule type" value="Genomic_DNA"/>
</dbReference>
<dbReference type="RefSeq" id="WP_000664407.1">
    <property type="nucleotide sequence ID" value="NC_008600.1"/>
</dbReference>
<dbReference type="SMR" id="A0RFD1"/>
<dbReference type="KEGG" id="btl:BALH_2641"/>
<dbReference type="HOGENOM" id="CLU_024321_0_1_9"/>
<dbReference type="UniPathway" id="UPA00053">
    <property type="reaction ID" value="UER00089"/>
</dbReference>
<dbReference type="GO" id="GO:0005737">
    <property type="term" value="C:cytoplasm"/>
    <property type="evidence" value="ECO:0007669"/>
    <property type="project" value="UniProtKB-SubCell"/>
</dbReference>
<dbReference type="GO" id="GO:0003866">
    <property type="term" value="F:3-phosphoshikimate 1-carboxyvinyltransferase activity"/>
    <property type="evidence" value="ECO:0007669"/>
    <property type="project" value="UniProtKB-UniRule"/>
</dbReference>
<dbReference type="GO" id="GO:0008652">
    <property type="term" value="P:amino acid biosynthetic process"/>
    <property type="evidence" value="ECO:0007669"/>
    <property type="project" value="UniProtKB-KW"/>
</dbReference>
<dbReference type="GO" id="GO:0009073">
    <property type="term" value="P:aromatic amino acid family biosynthetic process"/>
    <property type="evidence" value="ECO:0007669"/>
    <property type="project" value="UniProtKB-KW"/>
</dbReference>
<dbReference type="GO" id="GO:0009423">
    <property type="term" value="P:chorismate biosynthetic process"/>
    <property type="evidence" value="ECO:0007669"/>
    <property type="project" value="UniProtKB-UniRule"/>
</dbReference>
<dbReference type="CDD" id="cd01556">
    <property type="entry name" value="EPSP_synthase"/>
    <property type="match status" value="1"/>
</dbReference>
<dbReference type="FunFam" id="3.65.10.10:FF:000005">
    <property type="entry name" value="3-phosphoshikimate 1-carboxyvinyltransferase"/>
    <property type="match status" value="1"/>
</dbReference>
<dbReference type="Gene3D" id="3.65.10.10">
    <property type="entry name" value="Enolpyruvate transferase domain"/>
    <property type="match status" value="2"/>
</dbReference>
<dbReference type="HAMAP" id="MF_00210">
    <property type="entry name" value="EPSP_synth"/>
    <property type="match status" value="1"/>
</dbReference>
<dbReference type="InterPro" id="IPR001986">
    <property type="entry name" value="Enolpyruvate_Tfrase_dom"/>
</dbReference>
<dbReference type="InterPro" id="IPR036968">
    <property type="entry name" value="Enolpyruvate_Tfrase_sf"/>
</dbReference>
<dbReference type="InterPro" id="IPR006264">
    <property type="entry name" value="EPSP_synthase"/>
</dbReference>
<dbReference type="InterPro" id="IPR023193">
    <property type="entry name" value="EPSP_synthase_CS"/>
</dbReference>
<dbReference type="InterPro" id="IPR013792">
    <property type="entry name" value="RNA3'P_cycl/enolpyr_Trfase_a/b"/>
</dbReference>
<dbReference type="NCBIfam" id="TIGR01356">
    <property type="entry name" value="aroA"/>
    <property type="match status" value="1"/>
</dbReference>
<dbReference type="PANTHER" id="PTHR21090">
    <property type="entry name" value="AROM/DEHYDROQUINATE SYNTHASE"/>
    <property type="match status" value="1"/>
</dbReference>
<dbReference type="PANTHER" id="PTHR21090:SF5">
    <property type="entry name" value="PENTAFUNCTIONAL AROM POLYPEPTIDE"/>
    <property type="match status" value="1"/>
</dbReference>
<dbReference type="Pfam" id="PF00275">
    <property type="entry name" value="EPSP_synthase"/>
    <property type="match status" value="1"/>
</dbReference>
<dbReference type="PIRSF" id="PIRSF000505">
    <property type="entry name" value="EPSPS"/>
    <property type="match status" value="1"/>
</dbReference>
<dbReference type="SUPFAM" id="SSF55205">
    <property type="entry name" value="EPT/RTPC-like"/>
    <property type="match status" value="1"/>
</dbReference>
<dbReference type="PROSITE" id="PS00104">
    <property type="entry name" value="EPSP_SYNTHASE_1"/>
    <property type="match status" value="1"/>
</dbReference>
<dbReference type="PROSITE" id="PS00885">
    <property type="entry name" value="EPSP_SYNTHASE_2"/>
    <property type="match status" value="1"/>
</dbReference>
<accession>A0RFD1</accession>
<sequence>MKERIIQPVNSGLNGNITIPGDKSISHRAVMFGAIAEGKTTIKGFLPGADCLSTISCFKEMGVDIVQNGDEVTVVGKGLEGLQEPKAVLDVGNSGTTIRLMSGILANTPFFSCVQGDASIAKRPMKRVTNPLKQMGANIDGREEGTFTPLTIRGGDLKAIEYNSPVASAQVKSAILLAGLRAEGVTAVTEPHISRDHTERMLEAFGVKVTREGKTVKLAGGQKLTATDVQVPGDVSSAAFFLVAGAIIPNSKLVLENVGMNPTRTGIIDVLEKMGATFTVEPINEGASEPAANITIETSSLKGIEIGGDIIPRLIDEIPVIALAATQAEGITVIKDAHELKVKETNRIDTVVAELTKLGARIEATDDGMIIYGKSALKGNTVNSYGDHRIGMMLAIAGCIAEGKTIIEDAEAVGVSYPTFFEELQKLTK</sequence>
<evidence type="ECO:0000255" key="1">
    <source>
        <dbReference type="HAMAP-Rule" id="MF_00210"/>
    </source>
</evidence>